<organism>
    <name type="scientific">Nitrosomonas eutropha (strain DSM 101675 / C91 / Nm57)</name>
    <dbReference type="NCBI Taxonomy" id="335283"/>
    <lineage>
        <taxon>Bacteria</taxon>
        <taxon>Pseudomonadati</taxon>
        <taxon>Pseudomonadota</taxon>
        <taxon>Betaproteobacteria</taxon>
        <taxon>Nitrosomonadales</taxon>
        <taxon>Nitrosomonadaceae</taxon>
        <taxon>Nitrosomonas</taxon>
    </lineage>
</organism>
<reference key="1">
    <citation type="journal article" date="2007" name="Environ. Microbiol.">
        <title>Whole-genome analysis of the ammonia-oxidizing bacterium, Nitrosomonas eutropha C91: implications for niche adaptation.</title>
        <authorList>
            <person name="Stein L.Y."/>
            <person name="Arp D.J."/>
            <person name="Berube P.M."/>
            <person name="Chain P.S."/>
            <person name="Hauser L."/>
            <person name="Jetten M.S."/>
            <person name="Klotz M.G."/>
            <person name="Larimer F.W."/>
            <person name="Norton J.M."/>
            <person name="Op den Camp H.J.M."/>
            <person name="Shin M."/>
            <person name="Wei X."/>
        </authorList>
    </citation>
    <scope>NUCLEOTIDE SEQUENCE [LARGE SCALE GENOMIC DNA]</scope>
    <source>
        <strain>DSM 101675 / C91 / Nm57</strain>
    </source>
</reference>
<gene>
    <name evidence="1" type="primary">atpC</name>
    <name type="ordered locus">Neut_0278</name>
</gene>
<accession>Q0AJA9</accession>
<evidence type="ECO:0000255" key="1">
    <source>
        <dbReference type="HAMAP-Rule" id="MF_00530"/>
    </source>
</evidence>
<keyword id="KW-0066">ATP synthesis</keyword>
<keyword id="KW-0997">Cell inner membrane</keyword>
<keyword id="KW-1003">Cell membrane</keyword>
<keyword id="KW-0139">CF(1)</keyword>
<keyword id="KW-0375">Hydrogen ion transport</keyword>
<keyword id="KW-0406">Ion transport</keyword>
<keyword id="KW-0472">Membrane</keyword>
<keyword id="KW-0813">Transport</keyword>
<proteinExistence type="inferred from homology"/>
<comment type="function">
    <text evidence="1">Produces ATP from ADP in the presence of a proton gradient across the membrane.</text>
</comment>
<comment type="subunit">
    <text evidence="1">F-type ATPases have 2 components, CF(1) - the catalytic core - and CF(0) - the membrane proton channel. CF(1) has five subunits: alpha(3), beta(3), gamma(1), delta(1), epsilon(1). CF(0) has three main subunits: a, b and c.</text>
</comment>
<comment type="subcellular location">
    <subcellularLocation>
        <location evidence="1">Cell inner membrane</location>
        <topology evidence="1">Peripheral membrane protein</topology>
    </subcellularLocation>
</comment>
<comment type="similarity">
    <text evidence="1">Belongs to the ATPase epsilon chain family.</text>
</comment>
<dbReference type="EMBL" id="CP000450">
    <property type="protein sequence ID" value="ABI58562.1"/>
    <property type="molecule type" value="Genomic_DNA"/>
</dbReference>
<dbReference type="RefSeq" id="WP_011633406.1">
    <property type="nucleotide sequence ID" value="NC_008344.1"/>
</dbReference>
<dbReference type="SMR" id="Q0AJA9"/>
<dbReference type="STRING" id="335283.Neut_0278"/>
<dbReference type="KEGG" id="net:Neut_0278"/>
<dbReference type="eggNOG" id="COG0355">
    <property type="taxonomic scope" value="Bacteria"/>
</dbReference>
<dbReference type="HOGENOM" id="CLU_084338_2_0_4"/>
<dbReference type="OrthoDB" id="9791445at2"/>
<dbReference type="Proteomes" id="UP000001966">
    <property type="component" value="Chromosome"/>
</dbReference>
<dbReference type="GO" id="GO:0005886">
    <property type="term" value="C:plasma membrane"/>
    <property type="evidence" value="ECO:0007669"/>
    <property type="project" value="UniProtKB-SubCell"/>
</dbReference>
<dbReference type="GO" id="GO:0045259">
    <property type="term" value="C:proton-transporting ATP synthase complex"/>
    <property type="evidence" value="ECO:0007669"/>
    <property type="project" value="UniProtKB-KW"/>
</dbReference>
<dbReference type="GO" id="GO:0005524">
    <property type="term" value="F:ATP binding"/>
    <property type="evidence" value="ECO:0007669"/>
    <property type="project" value="UniProtKB-UniRule"/>
</dbReference>
<dbReference type="GO" id="GO:0046933">
    <property type="term" value="F:proton-transporting ATP synthase activity, rotational mechanism"/>
    <property type="evidence" value="ECO:0007669"/>
    <property type="project" value="UniProtKB-UniRule"/>
</dbReference>
<dbReference type="CDD" id="cd12152">
    <property type="entry name" value="F1-ATPase_delta"/>
    <property type="match status" value="1"/>
</dbReference>
<dbReference type="FunFam" id="2.60.15.10:FF:000001">
    <property type="entry name" value="ATP synthase epsilon chain"/>
    <property type="match status" value="1"/>
</dbReference>
<dbReference type="Gene3D" id="1.20.5.440">
    <property type="entry name" value="ATP synthase delta/epsilon subunit, C-terminal domain"/>
    <property type="match status" value="1"/>
</dbReference>
<dbReference type="Gene3D" id="2.60.15.10">
    <property type="entry name" value="F0F1 ATP synthase delta/epsilon subunit, N-terminal"/>
    <property type="match status" value="1"/>
</dbReference>
<dbReference type="HAMAP" id="MF_00530">
    <property type="entry name" value="ATP_synth_epsil_bac"/>
    <property type="match status" value="1"/>
</dbReference>
<dbReference type="InterPro" id="IPR036794">
    <property type="entry name" value="ATP_F1_dsu/esu_C_sf"/>
</dbReference>
<dbReference type="InterPro" id="IPR001469">
    <property type="entry name" value="ATP_synth_F1_dsu/esu"/>
</dbReference>
<dbReference type="InterPro" id="IPR020546">
    <property type="entry name" value="ATP_synth_F1_dsu/esu_N"/>
</dbReference>
<dbReference type="InterPro" id="IPR020547">
    <property type="entry name" value="ATP_synth_F1_esu_C"/>
</dbReference>
<dbReference type="InterPro" id="IPR036771">
    <property type="entry name" value="ATPsynth_dsu/esu_N"/>
</dbReference>
<dbReference type="NCBIfam" id="TIGR01216">
    <property type="entry name" value="ATP_synt_epsi"/>
    <property type="match status" value="1"/>
</dbReference>
<dbReference type="NCBIfam" id="NF001847">
    <property type="entry name" value="PRK00571.1-4"/>
    <property type="match status" value="1"/>
</dbReference>
<dbReference type="PANTHER" id="PTHR13822">
    <property type="entry name" value="ATP SYNTHASE DELTA/EPSILON CHAIN"/>
    <property type="match status" value="1"/>
</dbReference>
<dbReference type="PANTHER" id="PTHR13822:SF10">
    <property type="entry name" value="ATP SYNTHASE EPSILON CHAIN, CHLOROPLASTIC"/>
    <property type="match status" value="1"/>
</dbReference>
<dbReference type="Pfam" id="PF00401">
    <property type="entry name" value="ATP-synt_DE"/>
    <property type="match status" value="1"/>
</dbReference>
<dbReference type="Pfam" id="PF02823">
    <property type="entry name" value="ATP-synt_DE_N"/>
    <property type="match status" value="1"/>
</dbReference>
<dbReference type="SUPFAM" id="SSF46604">
    <property type="entry name" value="Epsilon subunit of F1F0-ATP synthase C-terminal domain"/>
    <property type="match status" value="1"/>
</dbReference>
<dbReference type="SUPFAM" id="SSF51344">
    <property type="entry name" value="Epsilon subunit of F1F0-ATP synthase N-terminal domain"/>
    <property type="match status" value="1"/>
</dbReference>
<sequence>MGTIFHLDIVSAEESIYSGPAEFIVAPAVMGEVGIYPQHTPMLTRIKSGVVRVKAPLQDDEEIYVSGGMLEVQPDVVTILADTAVRGQDLDEAKALEAKRKAEEIMKNKTSDIEYARAQAELIEATAQLAAIRKLRKRRH</sequence>
<feature type="chain" id="PRO_1000056512" description="ATP synthase epsilon chain">
    <location>
        <begin position="1"/>
        <end position="140"/>
    </location>
</feature>
<name>ATPE_NITEC</name>
<protein>
    <recommendedName>
        <fullName evidence="1">ATP synthase epsilon chain</fullName>
    </recommendedName>
    <alternativeName>
        <fullName evidence="1">ATP synthase F1 sector epsilon subunit</fullName>
    </alternativeName>
    <alternativeName>
        <fullName evidence="1">F-ATPase epsilon subunit</fullName>
    </alternativeName>
</protein>